<name>ORYC_ASPOR</name>
<protein>
    <recommendedName>
        <fullName evidence="4">MFS-type transporter oryC</fullName>
    </recommendedName>
    <alternativeName>
        <fullName evidence="4">Oryzines biosynthesis cluster protein C</fullName>
    </alternativeName>
</protein>
<organism>
    <name type="scientific">Aspergillus oryzae (strain ATCC 42149 / RIB 40)</name>
    <name type="common">Yellow koji mold</name>
    <dbReference type="NCBI Taxonomy" id="510516"/>
    <lineage>
        <taxon>Eukaryota</taxon>
        <taxon>Fungi</taxon>
        <taxon>Dikarya</taxon>
        <taxon>Ascomycota</taxon>
        <taxon>Pezizomycotina</taxon>
        <taxon>Eurotiomycetes</taxon>
        <taxon>Eurotiomycetidae</taxon>
        <taxon>Eurotiales</taxon>
        <taxon>Aspergillaceae</taxon>
        <taxon>Aspergillus</taxon>
        <taxon>Aspergillus subgen. Circumdati</taxon>
    </lineage>
</organism>
<proteinExistence type="inferred from homology"/>
<dbReference type="EMBL" id="BA000056">
    <property type="protein sequence ID" value="BAE66074.1"/>
    <property type="status" value="ALT_SEQ"/>
    <property type="molecule type" value="Genomic_DNA"/>
</dbReference>
<dbReference type="RefSeq" id="XP_001827207.2">
    <property type="nucleotide sequence ID" value="XM_001827155.2"/>
</dbReference>
<dbReference type="SMR" id="P9WEZ6"/>
<dbReference type="GlyCosmos" id="P9WEZ6">
    <property type="glycosylation" value="2 sites, No reported glycans"/>
</dbReference>
<dbReference type="Proteomes" id="UP000006564">
    <property type="component" value="Chromosome 8"/>
</dbReference>
<dbReference type="GO" id="GO:0016020">
    <property type="term" value="C:membrane"/>
    <property type="evidence" value="ECO:0007669"/>
    <property type="project" value="UniProtKB-SubCell"/>
</dbReference>
<dbReference type="GO" id="GO:0005351">
    <property type="term" value="F:carbohydrate:proton symporter activity"/>
    <property type="evidence" value="ECO:0007669"/>
    <property type="project" value="TreeGrafter"/>
</dbReference>
<dbReference type="FunFam" id="1.20.1250.20:FF:000061">
    <property type="entry name" value="MFS sugar transporter"/>
    <property type="match status" value="1"/>
</dbReference>
<dbReference type="Gene3D" id="1.20.1250.20">
    <property type="entry name" value="MFS general substrate transporter like domains"/>
    <property type="match status" value="1"/>
</dbReference>
<dbReference type="InterPro" id="IPR020846">
    <property type="entry name" value="MFS_dom"/>
</dbReference>
<dbReference type="InterPro" id="IPR005828">
    <property type="entry name" value="MFS_sugar_transport-like"/>
</dbReference>
<dbReference type="InterPro" id="IPR050360">
    <property type="entry name" value="MFS_Sugar_Transporters"/>
</dbReference>
<dbReference type="InterPro" id="IPR036259">
    <property type="entry name" value="MFS_trans_sf"/>
</dbReference>
<dbReference type="InterPro" id="IPR003663">
    <property type="entry name" value="Sugar/inositol_transpt"/>
</dbReference>
<dbReference type="InterPro" id="IPR005829">
    <property type="entry name" value="Sugar_transporter_CS"/>
</dbReference>
<dbReference type="NCBIfam" id="TIGR00879">
    <property type="entry name" value="SP"/>
    <property type="match status" value="1"/>
</dbReference>
<dbReference type="PANTHER" id="PTHR48022:SF26">
    <property type="entry name" value="MAJOR FACILITATOR SUPERFAMILY (MFS) PROFILE DOMAIN-CONTAINING PROTEIN-RELATED"/>
    <property type="match status" value="1"/>
</dbReference>
<dbReference type="PANTHER" id="PTHR48022">
    <property type="entry name" value="PLASTIDIC GLUCOSE TRANSPORTER 4"/>
    <property type="match status" value="1"/>
</dbReference>
<dbReference type="Pfam" id="PF00083">
    <property type="entry name" value="Sugar_tr"/>
    <property type="match status" value="1"/>
</dbReference>
<dbReference type="PRINTS" id="PR00171">
    <property type="entry name" value="SUGRTRNSPORT"/>
</dbReference>
<dbReference type="SUPFAM" id="SSF103473">
    <property type="entry name" value="MFS general substrate transporter"/>
    <property type="match status" value="1"/>
</dbReference>
<dbReference type="PROSITE" id="PS50850">
    <property type="entry name" value="MFS"/>
    <property type="match status" value="1"/>
</dbReference>
<dbReference type="PROSITE" id="PS00216">
    <property type="entry name" value="SUGAR_TRANSPORT_1"/>
    <property type="match status" value="1"/>
</dbReference>
<gene>
    <name evidence="4" type="primary">oryC</name>
    <name type="ORF">AO090010000172</name>
</gene>
<feature type="chain" id="PRO_0000450485" description="MFS-type transporter oryC">
    <location>
        <begin position="1"/>
        <end position="538"/>
    </location>
</feature>
<feature type="transmembrane region" description="Helical" evidence="1">
    <location>
        <begin position="14"/>
        <end position="34"/>
    </location>
</feature>
<feature type="transmembrane region" description="Helical" evidence="1">
    <location>
        <begin position="67"/>
        <end position="87"/>
    </location>
</feature>
<feature type="transmembrane region" description="Helical" evidence="1">
    <location>
        <begin position="96"/>
        <end position="116"/>
    </location>
</feature>
<feature type="transmembrane region" description="Helical" evidence="1">
    <location>
        <begin position="120"/>
        <end position="140"/>
    </location>
</feature>
<feature type="transmembrane region" description="Helical" evidence="1">
    <location>
        <begin position="162"/>
        <end position="182"/>
    </location>
</feature>
<feature type="transmembrane region" description="Helical" evidence="1">
    <location>
        <begin position="186"/>
        <end position="206"/>
    </location>
</feature>
<feature type="transmembrane region" description="Helical" evidence="1">
    <location>
        <begin position="288"/>
        <end position="308"/>
    </location>
</feature>
<feature type="transmembrane region" description="Helical" evidence="1">
    <location>
        <begin position="315"/>
        <end position="335"/>
    </location>
</feature>
<feature type="transmembrane region" description="Helical" evidence="1">
    <location>
        <begin position="342"/>
        <end position="362"/>
    </location>
</feature>
<feature type="transmembrane region" description="Helical" evidence="1">
    <location>
        <begin position="379"/>
        <end position="399"/>
    </location>
</feature>
<feature type="transmembrane region" description="Helical" evidence="1">
    <location>
        <begin position="416"/>
        <end position="436"/>
    </location>
</feature>
<feature type="transmembrane region" description="Helical" evidence="1">
    <location>
        <begin position="443"/>
        <end position="463"/>
    </location>
</feature>
<feature type="glycosylation site" description="N-linked (GlcNAc...) asparagine" evidence="2">
    <location>
        <position position="268"/>
    </location>
</feature>
<feature type="glycosylation site" description="N-linked (GlcNAc...) asparagine" evidence="2">
    <location>
        <position position="467"/>
    </location>
</feature>
<reference key="1">
    <citation type="journal article" date="2005" name="Nature">
        <title>Genome sequencing and analysis of Aspergillus oryzae.</title>
        <authorList>
            <person name="Machida M."/>
            <person name="Asai K."/>
            <person name="Sano M."/>
            <person name="Tanaka T."/>
            <person name="Kumagai T."/>
            <person name="Terai G."/>
            <person name="Kusumoto K."/>
            <person name="Arima T."/>
            <person name="Akita O."/>
            <person name="Kashiwagi Y."/>
            <person name="Abe K."/>
            <person name="Gomi K."/>
            <person name="Horiuchi H."/>
            <person name="Kitamoto K."/>
            <person name="Kobayashi T."/>
            <person name="Takeuchi M."/>
            <person name="Denning D.W."/>
            <person name="Galagan J.E."/>
            <person name="Nierman W.C."/>
            <person name="Yu J."/>
            <person name="Archer D.B."/>
            <person name="Bennett J.W."/>
            <person name="Bhatnagar D."/>
            <person name="Cleveland T.E."/>
            <person name="Fedorova N.D."/>
            <person name="Gotoh O."/>
            <person name="Horikawa H."/>
            <person name="Hosoyama A."/>
            <person name="Ichinomiya M."/>
            <person name="Igarashi R."/>
            <person name="Iwashita K."/>
            <person name="Juvvadi P.R."/>
            <person name="Kato M."/>
            <person name="Kato Y."/>
            <person name="Kin T."/>
            <person name="Kokubun A."/>
            <person name="Maeda H."/>
            <person name="Maeyama N."/>
            <person name="Maruyama J."/>
            <person name="Nagasaki H."/>
            <person name="Nakajima T."/>
            <person name="Oda K."/>
            <person name="Okada K."/>
            <person name="Paulsen I."/>
            <person name="Sakamoto K."/>
            <person name="Sawano T."/>
            <person name="Takahashi M."/>
            <person name="Takase K."/>
            <person name="Terabayashi Y."/>
            <person name="Wortman J.R."/>
            <person name="Yamada O."/>
            <person name="Yamagata Y."/>
            <person name="Anazawa H."/>
            <person name="Hata Y."/>
            <person name="Koide Y."/>
            <person name="Komori T."/>
            <person name="Koyama Y."/>
            <person name="Minetoki T."/>
            <person name="Suharnan S."/>
            <person name="Tanaka A."/>
            <person name="Isono K."/>
            <person name="Kuhara S."/>
            <person name="Ogasawara N."/>
            <person name="Kikuchi H."/>
        </authorList>
    </citation>
    <scope>NUCLEOTIDE SEQUENCE [LARGE SCALE GENOMIC DNA]</scope>
    <source>
        <strain>ATCC 42149 / RIB 40</strain>
    </source>
</reference>
<reference key="2">
    <citation type="journal article" date="2018" name="J. Fungi">
        <title>Oryzines A &amp; B, maleidride congeners from Aspergillus oryzae and their putative biosynthesis.</title>
        <authorList>
            <person name="Wasil Z."/>
            <person name="Kuhnert E."/>
            <person name="Simpson T.J."/>
            <person name="Cox R.J."/>
        </authorList>
    </citation>
    <scope>FUNCTION</scope>
</reference>
<evidence type="ECO:0000255" key="1"/>
<evidence type="ECO:0000255" key="2">
    <source>
        <dbReference type="PROSITE-ProRule" id="PRU00498"/>
    </source>
</evidence>
<evidence type="ECO:0000269" key="3">
    <source>
    </source>
</evidence>
<evidence type="ECO:0000303" key="4">
    <source>
    </source>
</evidence>
<evidence type="ECO:0000305" key="5"/>
<evidence type="ECO:0000305" key="6">
    <source>
    </source>
</evidence>
<accession>P9WEZ6</accession>
<accession>Q2TXE9</accession>
<comment type="function">
    <text evidence="3">MFS-type transporter; part of the gene cluster that mediates the biosynthesis of oryzines, natural products with an unusual maleidride backbone.</text>
</comment>
<comment type="subcellular location">
    <subcellularLocation>
        <location evidence="1">Membrane</location>
        <topology evidence="1">Multi-pass membrane protein</topology>
    </subcellularLocation>
</comment>
<comment type="similarity">
    <text evidence="5">Belongs to the major facilitator superfamily. Sugar transporter (TC 2.A.1.1) family.</text>
</comment>
<comment type="sequence caution" evidence="6">
    <conflict type="erroneous gene model prediction">
        <sequence resource="EMBL-CDS" id="BAE66074"/>
    </conflict>
    <text>The predicted gene AO090010000172 has been split into 2 genes: oryC and oryD.</text>
</comment>
<sequence>MTVLTREKKPYFGLTGGWLTFWVTVACATDMSLFGYDQGVFSGVVITRDFLEVHDLVGPEKTKTLSTVTAIYDVGCFFGAIVAFTIGEQLGRKKAILLGTTIMAIGAVLQAASFSLAQMFVGRIILGIGNGINTATAPIWQTETSQLKWRGKLVIFEMMMNIFGFCLVNWINYGLSFVGGSIAWRFPLAFQFFFLIILWSTTPWLPESPRWLIAHGRQEEATVVLSCLEAKPIDDPFVIAQRNEIEFSVRYERENSMRWRDLCQKKGNDSKTLRRLLLGAGSQFMQQFGGINIMSYYLPTVLMDSVGLSDTMARLLAACNALSYLVFSGLAVLLVERIGRRGLMLLSTFGQFLCFLIITILLRFSRISDNGEKFASASVAFFFLYYGAFGIGMLGVPWLYPTEINSLPMRTKGAAVATATDWITNFVVVEITPIGIKNIDWKFWIVWTVTNAAFLPILYFLYPETANRSLEDMDEYYRSNPALVVTKDPDAICRRRPQKYLQREEEEIERAAAAVDKRALSVGAVEHAEWTNAMGNKS</sequence>
<keyword id="KW-0325">Glycoprotein</keyword>
<keyword id="KW-0472">Membrane</keyword>
<keyword id="KW-1185">Reference proteome</keyword>
<keyword id="KW-0812">Transmembrane</keyword>
<keyword id="KW-1133">Transmembrane helix</keyword>
<keyword id="KW-0813">Transport</keyword>